<sequence>MAYFPHTPQEIREMLNTIGVDSIEELFSEIPEEIRQKAKENFKLSASPSEIDLLEEIKQISKKNIGKDYISFLGGGAYRHYIPSFVKLVSLFPTFYTSYTPYQPEISQGVLQSIFEYQSLICDLTGMEVANASLYEAGSGIAEAALMSVRITGKKEVIVSSGLNPEYISVLKTYLQVQNIDLKILPLDENGETDITALERTISPSTSGVILQNPNFFGVIETKLKEMETLIHKNNALFILSIYPISLGILKPPSEYNVDIVVGEGQSLGIPLGFGGPYLGILATKKEFIRQIPGRIVGETIDLEGERGFVNTLQTREQHIRRAKATSNICTNEALSAISAAVYMALLGKKGIKKIAEVCFSRAHYLKDRLQKKLGIDFIYPNSYFFNEFVIKTPENSKVFLKKLEERKILGGIPLSKFYKEREKEILIAVTERNSIEEIDYYVKSLKEVLKKD</sequence>
<organism>
    <name type="scientific">Dictyoglomus turgidum (strain DSM 6724 / Z-1310)</name>
    <dbReference type="NCBI Taxonomy" id="515635"/>
    <lineage>
        <taxon>Bacteria</taxon>
        <taxon>Pseudomonadati</taxon>
        <taxon>Dictyoglomota</taxon>
        <taxon>Dictyoglomia</taxon>
        <taxon>Dictyoglomales</taxon>
        <taxon>Dictyoglomaceae</taxon>
        <taxon>Dictyoglomus</taxon>
    </lineage>
</organism>
<gene>
    <name evidence="1" type="primary">gcvPA</name>
    <name type="ordered locus">Dtur_1517</name>
</gene>
<comment type="function">
    <text evidence="1">The glycine cleavage system catalyzes the degradation of glycine. The P protein binds the alpha-amino group of glycine through its pyridoxal phosphate cofactor; CO(2) is released and the remaining methylamine moiety is then transferred to the lipoamide cofactor of the H protein.</text>
</comment>
<comment type="catalytic activity">
    <reaction evidence="1">
        <text>N(6)-[(R)-lipoyl]-L-lysyl-[glycine-cleavage complex H protein] + glycine + H(+) = N(6)-[(R)-S(8)-aminomethyldihydrolipoyl]-L-lysyl-[glycine-cleavage complex H protein] + CO2</text>
        <dbReference type="Rhea" id="RHEA:24304"/>
        <dbReference type="Rhea" id="RHEA-COMP:10494"/>
        <dbReference type="Rhea" id="RHEA-COMP:10495"/>
        <dbReference type="ChEBI" id="CHEBI:15378"/>
        <dbReference type="ChEBI" id="CHEBI:16526"/>
        <dbReference type="ChEBI" id="CHEBI:57305"/>
        <dbReference type="ChEBI" id="CHEBI:83099"/>
        <dbReference type="ChEBI" id="CHEBI:83143"/>
        <dbReference type="EC" id="1.4.4.2"/>
    </reaction>
</comment>
<comment type="subunit">
    <text evidence="1">The glycine cleavage system is composed of four proteins: P, T, L and H. In this organism, the P 'protein' is a heterodimer of two subunits.</text>
</comment>
<comment type="similarity">
    <text evidence="1">Belongs to the GcvP family. N-terminal subunit subfamily.</text>
</comment>
<dbReference type="EC" id="1.4.4.2" evidence="1"/>
<dbReference type="EMBL" id="CP001251">
    <property type="protein sequence ID" value="ACK42791.1"/>
    <property type="molecule type" value="Genomic_DNA"/>
</dbReference>
<dbReference type="RefSeq" id="WP_012583867.1">
    <property type="nucleotide sequence ID" value="NC_011661.1"/>
</dbReference>
<dbReference type="RefSeq" id="YP_002353405.1">
    <property type="nucleotide sequence ID" value="NC_011661.1"/>
</dbReference>
<dbReference type="SMR" id="B8E2E7"/>
<dbReference type="FunCoup" id="B8E2E7">
    <property type="interactions" value="49"/>
</dbReference>
<dbReference type="STRING" id="515635.Dtur_1517"/>
<dbReference type="EnsemblBacteria" id="ACK42791">
    <property type="protein sequence ID" value="ACK42791"/>
    <property type="gene ID" value="Dtur_1517"/>
</dbReference>
<dbReference type="KEGG" id="dtu:Dtur_1517"/>
<dbReference type="PATRIC" id="fig|515635.4.peg.1566"/>
<dbReference type="eggNOG" id="COG0403">
    <property type="taxonomic scope" value="Bacteria"/>
</dbReference>
<dbReference type="HOGENOM" id="CLU_004620_0_2_0"/>
<dbReference type="InParanoid" id="B8E2E7"/>
<dbReference type="OrthoDB" id="9801272at2"/>
<dbReference type="Proteomes" id="UP000007719">
    <property type="component" value="Chromosome"/>
</dbReference>
<dbReference type="GO" id="GO:0004375">
    <property type="term" value="F:glycine dehydrogenase (decarboxylating) activity"/>
    <property type="evidence" value="ECO:0007669"/>
    <property type="project" value="UniProtKB-EC"/>
</dbReference>
<dbReference type="GO" id="GO:0019464">
    <property type="term" value="P:glycine decarboxylation via glycine cleavage system"/>
    <property type="evidence" value="ECO:0007669"/>
    <property type="project" value="UniProtKB-UniRule"/>
</dbReference>
<dbReference type="GO" id="GO:0009116">
    <property type="term" value="P:nucleoside metabolic process"/>
    <property type="evidence" value="ECO:0007669"/>
    <property type="project" value="InterPro"/>
</dbReference>
<dbReference type="CDD" id="cd00613">
    <property type="entry name" value="GDC-P"/>
    <property type="match status" value="1"/>
</dbReference>
<dbReference type="Gene3D" id="3.90.1150.10">
    <property type="entry name" value="Aspartate Aminotransferase, domain 1"/>
    <property type="match status" value="1"/>
</dbReference>
<dbReference type="Gene3D" id="3.40.640.10">
    <property type="entry name" value="Type I PLP-dependent aspartate aminotransferase-like (Major domain)"/>
    <property type="match status" value="1"/>
</dbReference>
<dbReference type="HAMAP" id="MF_00712">
    <property type="entry name" value="GcvPA"/>
    <property type="match status" value="1"/>
</dbReference>
<dbReference type="InterPro" id="IPR023010">
    <property type="entry name" value="GcvPA"/>
</dbReference>
<dbReference type="InterPro" id="IPR049315">
    <property type="entry name" value="GDC-P_N"/>
</dbReference>
<dbReference type="InterPro" id="IPR020581">
    <property type="entry name" value="GDC_P"/>
</dbReference>
<dbReference type="InterPro" id="IPR015424">
    <property type="entry name" value="PyrdxlP-dep_Trfase"/>
</dbReference>
<dbReference type="InterPro" id="IPR015421">
    <property type="entry name" value="PyrdxlP-dep_Trfase_major"/>
</dbReference>
<dbReference type="InterPro" id="IPR015422">
    <property type="entry name" value="PyrdxlP-dep_Trfase_small"/>
</dbReference>
<dbReference type="NCBIfam" id="NF001696">
    <property type="entry name" value="PRK00451.1"/>
    <property type="match status" value="1"/>
</dbReference>
<dbReference type="PANTHER" id="PTHR42806">
    <property type="entry name" value="GLYCINE CLEAVAGE SYSTEM P-PROTEIN"/>
    <property type="match status" value="1"/>
</dbReference>
<dbReference type="PANTHER" id="PTHR42806:SF1">
    <property type="entry name" value="GLYCINE DEHYDROGENASE (DECARBOXYLATING)"/>
    <property type="match status" value="1"/>
</dbReference>
<dbReference type="Pfam" id="PF02347">
    <property type="entry name" value="GDC-P"/>
    <property type="match status" value="1"/>
</dbReference>
<dbReference type="PIRSF" id="PIRSF006815">
    <property type="entry name" value="GcvPA"/>
    <property type="match status" value="1"/>
</dbReference>
<dbReference type="SUPFAM" id="SSF53383">
    <property type="entry name" value="PLP-dependent transferases"/>
    <property type="match status" value="1"/>
</dbReference>
<name>GCSPA_DICTD</name>
<accession>B8E2E7</accession>
<feature type="chain" id="PRO_1000147985" description="Probable glycine dehydrogenase (decarboxylating) subunit 1">
    <location>
        <begin position="1"/>
        <end position="453"/>
    </location>
</feature>
<evidence type="ECO:0000255" key="1">
    <source>
        <dbReference type="HAMAP-Rule" id="MF_00712"/>
    </source>
</evidence>
<protein>
    <recommendedName>
        <fullName evidence="1">Probable glycine dehydrogenase (decarboxylating) subunit 1</fullName>
        <ecNumber evidence="1">1.4.4.2</ecNumber>
    </recommendedName>
    <alternativeName>
        <fullName evidence="1">Glycine cleavage system P-protein subunit 1</fullName>
    </alternativeName>
    <alternativeName>
        <fullName evidence="1">Glycine decarboxylase subunit 1</fullName>
    </alternativeName>
    <alternativeName>
        <fullName evidence="1">Glycine dehydrogenase (aminomethyl-transferring) subunit 1</fullName>
    </alternativeName>
</protein>
<reference key="1">
    <citation type="journal article" date="2016" name="Front. Microbiol.">
        <title>The complete genome sequence of hyperthermophile Dictyoglomus turgidum DSM 6724 reveals a specialized carbohydrate fermentor.</title>
        <authorList>
            <person name="Brumm P.J."/>
            <person name="Gowda K."/>
            <person name="Robb F.T."/>
            <person name="Mead D.A."/>
        </authorList>
    </citation>
    <scope>NUCLEOTIDE SEQUENCE [LARGE SCALE GENOMIC DNA]</scope>
    <source>
        <strain>DSM 6724 / Z-1310</strain>
    </source>
</reference>
<keyword id="KW-0560">Oxidoreductase</keyword>
<keyword id="KW-1185">Reference proteome</keyword>
<proteinExistence type="inferred from homology"/>